<gene>
    <name evidence="1" type="primary">rlmD</name>
    <name type="synonym">rumA</name>
    <name type="ordered locus">PSHAa0738</name>
</gene>
<feature type="chain" id="PRO_0000282051" description="23S rRNA (uracil(1939)-C(5))-methyltransferase RlmD">
    <location>
        <begin position="1"/>
        <end position="441"/>
    </location>
</feature>
<feature type="domain" description="TRAM" evidence="1">
    <location>
        <begin position="10"/>
        <end position="68"/>
    </location>
</feature>
<feature type="active site" description="Nucleophile" evidence="1">
    <location>
        <position position="398"/>
    </location>
</feature>
<feature type="binding site" evidence="1">
    <location>
        <position position="81"/>
    </location>
    <ligand>
        <name>[4Fe-4S] cluster</name>
        <dbReference type="ChEBI" id="CHEBI:49883"/>
    </ligand>
</feature>
<feature type="binding site" evidence="1">
    <location>
        <position position="87"/>
    </location>
    <ligand>
        <name>[4Fe-4S] cluster</name>
        <dbReference type="ChEBI" id="CHEBI:49883"/>
    </ligand>
</feature>
<feature type="binding site" evidence="1">
    <location>
        <position position="90"/>
    </location>
    <ligand>
        <name>[4Fe-4S] cluster</name>
        <dbReference type="ChEBI" id="CHEBI:49883"/>
    </ligand>
</feature>
<feature type="binding site" evidence="1">
    <location>
        <position position="169"/>
    </location>
    <ligand>
        <name>[4Fe-4S] cluster</name>
        <dbReference type="ChEBI" id="CHEBI:49883"/>
    </ligand>
</feature>
<feature type="binding site" evidence="1">
    <location>
        <position position="274"/>
    </location>
    <ligand>
        <name>S-adenosyl-L-methionine</name>
        <dbReference type="ChEBI" id="CHEBI:59789"/>
    </ligand>
</feature>
<feature type="binding site" evidence="1">
    <location>
        <position position="303"/>
    </location>
    <ligand>
        <name>S-adenosyl-L-methionine</name>
        <dbReference type="ChEBI" id="CHEBI:59789"/>
    </ligand>
</feature>
<feature type="binding site" evidence="1">
    <location>
        <position position="308"/>
    </location>
    <ligand>
        <name>S-adenosyl-L-methionine</name>
        <dbReference type="ChEBI" id="CHEBI:59789"/>
    </ligand>
</feature>
<feature type="binding site" evidence="1">
    <location>
        <position position="324"/>
    </location>
    <ligand>
        <name>S-adenosyl-L-methionine</name>
        <dbReference type="ChEBI" id="CHEBI:59789"/>
    </ligand>
</feature>
<feature type="binding site" evidence="1">
    <location>
        <position position="351"/>
    </location>
    <ligand>
        <name>S-adenosyl-L-methionine</name>
        <dbReference type="ChEBI" id="CHEBI:59789"/>
    </ligand>
</feature>
<feature type="binding site" evidence="1">
    <location>
        <position position="372"/>
    </location>
    <ligand>
        <name>S-adenosyl-L-methionine</name>
        <dbReference type="ChEBI" id="CHEBI:59789"/>
    </ligand>
</feature>
<proteinExistence type="inferred from homology"/>
<organism>
    <name type="scientific">Pseudoalteromonas translucida (strain TAC 125)</name>
    <dbReference type="NCBI Taxonomy" id="326442"/>
    <lineage>
        <taxon>Bacteria</taxon>
        <taxon>Pseudomonadati</taxon>
        <taxon>Pseudomonadota</taxon>
        <taxon>Gammaproteobacteria</taxon>
        <taxon>Alteromonadales</taxon>
        <taxon>Pseudoalteromonadaceae</taxon>
        <taxon>Pseudoalteromonas</taxon>
    </lineage>
</organism>
<reference key="1">
    <citation type="journal article" date="2005" name="Genome Res.">
        <title>Coping with cold: the genome of the versatile marine Antarctica bacterium Pseudoalteromonas haloplanktis TAC125.</title>
        <authorList>
            <person name="Medigue C."/>
            <person name="Krin E."/>
            <person name="Pascal G."/>
            <person name="Barbe V."/>
            <person name="Bernsel A."/>
            <person name="Bertin P.N."/>
            <person name="Cheung F."/>
            <person name="Cruveiller S."/>
            <person name="D'Amico S."/>
            <person name="Duilio A."/>
            <person name="Fang G."/>
            <person name="Feller G."/>
            <person name="Ho C."/>
            <person name="Mangenot S."/>
            <person name="Marino G."/>
            <person name="Nilsson J."/>
            <person name="Parrilli E."/>
            <person name="Rocha E.P.C."/>
            <person name="Rouy Z."/>
            <person name="Sekowska A."/>
            <person name="Tutino M.L."/>
            <person name="Vallenet D."/>
            <person name="von Heijne G."/>
            <person name="Danchin A."/>
        </authorList>
    </citation>
    <scope>NUCLEOTIDE SEQUENCE [LARGE SCALE GENOMIC DNA]</scope>
    <source>
        <strain>TAC 125</strain>
    </source>
</reference>
<comment type="function">
    <text evidence="1">Catalyzes the formation of 5-methyl-uridine at position 1939 (m5U1939) in 23S rRNA.</text>
</comment>
<comment type="catalytic activity">
    <reaction evidence="1">
        <text>uridine(1939) in 23S rRNA + S-adenosyl-L-methionine = 5-methyluridine(1939) in 23S rRNA + S-adenosyl-L-homocysteine + H(+)</text>
        <dbReference type="Rhea" id="RHEA:42908"/>
        <dbReference type="Rhea" id="RHEA-COMP:10278"/>
        <dbReference type="Rhea" id="RHEA-COMP:10279"/>
        <dbReference type="ChEBI" id="CHEBI:15378"/>
        <dbReference type="ChEBI" id="CHEBI:57856"/>
        <dbReference type="ChEBI" id="CHEBI:59789"/>
        <dbReference type="ChEBI" id="CHEBI:65315"/>
        <dbReference type="ChEBI" id="CHEBI:74447"/>
        <dbReference type="EC" id="2.1.1.190"/>
    </reaction>
</comment>
<comment type="similarity">
    <text evidence="1">Belongs to the class I-like SAM-binding methyltransferase superfamily. RNA M5U methyltransferase family. RlmD subfamily.</text>
</comment>
<dbReference type="EC" id="2.1.1.190" evidence="1"/>
<dbReference type="EMBL" id="CR954246">
    <property type="protein sequence ID" value="CAI85821.1"/>
    <property type="molecule type" value="Genomic_DNA"/>
</dbReference>
<dbReference type="SMR" id="Q3IDM6"/>
<dbReference type="STRING" id="326442.PSHAa0738"/>
<dbReference type="KEGG" id="pha:PSHAa0738"/>
<dbReference type="PATRIC" id="fig|326442.8.peg.701"/>
<dbReference type="eggNOG" id="COG2265">
    <property type="taxonomic scope" value="Bacteria"/>
</dbReference>
<dbReference type="HOGENOM" id="CLU_014689_8_2_6"/>
<dbReference type="BioCyc" id="PHAL326442:PSHA_RS03605-MONOMER"/>
<dbReference type="Proteomes" id="UP000006843">
    <property type="component" value="Chromosome I"/>
</dbReference>
<dbReference type="GO" id="GO:0051539">
    <property type="term" value="F:4 iron, 4 sulfur cluster binding"/>
    <property type="evidence" value="ECO:0007669"/>
    <property type="project" value="UniProtKB-KW"/>
</dbReference>
<dbReference type="GO" id="GO:0005506">
    <property type="term" value="F:iron ion binding"/>
    <property type="evidence" value="ECO:0007669"/>
    <property type="project" value="UniProtKB-UniRule"/>
</dbReference>
<dbReference type="GO" id="GO:0003723">
    <property type="term" value="F:RNA binding"/>
    <property type="evidence" value="ECO:0007669"/>
    <property type="project" value="InterPro"/>
</dbReference>
<dbReference type="GO" id="GO:0070041">
    <property type="term" value="F:rRNA (uridine-C5-)-methyltransferase activity"/>
    <property type="evidence" value="ECO:0007669"/>
    <property type="project" value="UniProtKB-UniRule"/>
</dbReference>
<dbReference type="GO" id="GO:0070475">
    <property type="term" value="P:rRNA base methylation"/>
    <property type="evidence" value="ECO:0007669"/>
    <property type="project" value="TreeGrafter"/>
</dbReference>
<dbReference type="CDD" id="cd02440">
    <property type="entry name" value="AdoMet_MTases"/>
    <property type="match status" value="1"/>
</dbReference>
<dbReference type="FunFam" id="3.40.50.150:FF:000009">
    <property type="entry name" value="23S rRNA (Uracil(1939)-C(5))-methyltransferase RlmD"/>
    <property type="match status" value="1"/>
</dbReference>
<dbReference type="FunFam" id="2.40.50.140:FF:000097">
    <property type="entry name" value="23S rRNA (uracil(1939)-C(5))-methyltransferase RlmD"/>
    <property type="match status" value="1"/>
</dbReference>
<dbReference type="Gene3D" id="2.40.50.1070">
    <property type="match status" value="1"/>
</dbReference>
<dbReference type="Gene3D" id="2.40.50.140">
    <property type="entry name" value="Nucleic acid-binding proteins"/>
    <property type="match status" value="1"/>
</dbReference>
<dbReference type="Gene3D" id="3.40.50.150">
    <property type="entry name" value="Vaccinia Virus protein VP39"/>
    <property type="match status" value="1"/>
</dbReference>
<dbReference type="HAMAP" id="MF_01010">
    <property type="entry name" value="23SrRNA_methyltr_RlmD"/>
    <property type="match status" value="1"/>
</dbReference>
<dbReference type="InterPro" id="IPR001566">
    <property type="entry name" value="23S_rRNA_MeTrfase_RlmD"/>
</dbReference>
<dbReference type="InterPro" id="IPR030390">
    <property type="entry name" value="MeTrfase_TrmA_AS"/>
</dbReference>
<dbReference type="InterPro" id="IPR030391">
    <property type="entry name" value="MeTrfase_TrmA_CS"/>
</dbReference>
<dbReference type="InterPro" id="IPR012340">
    <property type="entry name" value="NA-bd_OB-fold"/>
</dbReference>
<dbReference type="InterPro" id="IPR029063">
    <property type="entry name" value="SAM-dependent_MTases_sf"/>
</dbReference>
<dbReference type="InterPro" id="IPR002792">
    <property type="entry name" value="TRAM_dom"/>
</dbReference>
<dbReference type="InterPro" id="IPR010280">
    <property type="entry name" value="U5_MeTrfase_fam"/>
</dbReference>
<dbReference type="NCBIfam" id="NF009639">
    <property type="entry name" value="PRK13168.1"/>
    <property type="match status" value="1"/>
</dbReference>
<dbReference type="NCBIfam" id="TIGR00479">
    <property type="entry name" value="rumA"/>
    <property type="match status" value="1"/>
</dbReference>
<dbReference type="PANTHER" id="PTHR11061:SF49">
    <property type="entry name" value="23S RRNA (URACIL(1939)-C(5))-METHYLTRANSFERASE RLMD"/>
    <property type="match status" value="1"/>
</dbReference>
<dbReference type="PANTHER" id="PTHR11061">
    <property type="entry name" value="RNA M5U METHYLTRANSFERASE"/>
    <property type="match status" value="1"/>
</dbReference>
<dbReference type="Pfam" id="PF01938">
    <property type="entry name" value="TRAM"/>
    <property type="match status" value="1"/>
</dbReference>
<dbReference type="Pfam" id="PF05958">
    <property type="entry name" value="tRNA_U5-meth_tr"/>
    <property type="match status" value="1"/>
</dbReference>
<dbReference type="SUPFAM" id="SSF50249">
    <property type="entry name" value="Nucleic acid-binding proteins"/>
    <property type="match status" value="1"/>
</dbReference>
<dbReference type="SUPFAM" id="SSF53335">
    <property type="entry name" value="S-adenosyl-L-methionine-dependent methyltransferases"/>
    <property type="match status" value="1"/>
</dbReference>
<dbReference type="PROSITE" id="PS51687">
    <property type="entry name" value="SAM_MT_RNA_M5U"/>
    <property type="match status" value="1"/>
</dbReference>
<dbReference type="PROSITE" id="PS01230">
    <property type="entry name" value="TRMA_1"/>
    <property type="match status" value="1"/>
</dbReference>
<dbReference type="PROSITE" id="PS01231">
    <property type="entry name" value="TRMA_2"/>
    <property type="match status" value="1"/>
</dbReference>
<accession>Q3IDM6</accession>
<protein>
    <recommendedName>
        <fullName evidence="1">23S rRNA (uracil(1939)-C(5))-methyltransferase RlmD</fullName>
        <ecNumber evidence="1">2.1.1.190</ecNumber>
    </recommendedName>
    <alternativeName>
        <fullName evidence="1">23S rRNA(m5U1939)-methyltransferase</fullName>
    </alternativeName>
</protein>
<name>RLMD_PSET1</name>
<keyword id="KW-0004">4Fe-4S</keyword>
<keyword id="KW-0408">Iron</keyword>
<keyword id="KW-0411">Iron-sulfur</keyword>
<keyword id="KW-0479">Metal-binding</keyword>
<keyword id="KW-0489">Methyltransferase</keyword>
<keyword id="KW-1185">Reference proteome</keyword>
<keyword id="KW-0698">rRNA processing</keyword>
<keyword id="KW-0949">S-adenosyl-L-methionine</keyword>
<keyword id="KW-0808">Transferase</keyword>
<sequence>MAQIFKATKKPLKQQSLVLDITAMDHHGRGIAKHNNKVCFVSNALPNEQVKATIIADKARYSEAQTHKVLQASEYRVAPFCEHYNQCGGCQLQHLDSSQQVVEKQIAVSKLFEKFAKLDELNWQAPLLSKATHYRRSARLAVMFDKKAKKMHVGYRASGSKSIISINECPVLSEVFANVFTVFDNLINQHKALHSVSHLQLCQGDEQNFVIIRHTKPISEDIKALVAQSAAEQQWQLVWQSESEVIEHSHLAMPFYALEELGLKFEFGLNNFIQVNASVNQAMLKQAQNWLALKGDENVLDLFCGIGNFSLVLAKQAKTVIGVEGVASAVAMATQNAHTNSITNAQFNCFDLTNKIETASWFNKNLDVLVLDPSRTGAITVLEQLPLKQFKTILYVSCDPVTLARDSAIISQAGFELHKIGLMNMFPHTGHIETMALFQRR</sequence>
<evidence type="ECO:0000255" key="1">
    <source>
        <dbReference type="HAMAP-Rule" id="MF_01010"/>
    </source>
</evidence>